<proteinExistence type="evidence at protein level"/>
<evidence type="ECO:0000255" key="1"/>
<evidence type="ECO:0000256" key="2">
    <source>
        <dbReference type="SAM" id="MobiDB-lite"/>
    </source>
</evidence>
<evidence type="ECO:0000269" key="3">
    <source>
    </source>
</evidence>
<evidence type="ECO:0000303" key="4">
    <source>
    </source>
</evidence>
<evidence type="ECO:0000305" key="5"/>
<evidence type="ECO:0000305" key="6">
    <source>
    </source>
</evidence>
<name>VNPB_OXYSC</name>
<sequence length="111" mass="11252">MVGLSRLAGGGLLLLLLLALLPLALDGKPAPLPQALPEALAGGTTALRRDVTEEQQQQLVAEESSGPAAGRSDPKIGDGCFGLPLDHIGSVSGLGCNRPVQNRPKQIPGGS</sequence>
<dbReference type="EMBL" id="AY691663">
    <property type="protein sequence ID" value="AAY47072.1"/>
    <property type="molecule type" value="mRNA"/>
</dbReference>
<dbReference type="GO" id="GO:0005576">
    <property type="term" value="C:extracellular region"/>
    <property type="evidence" value="ECO:0007669"/>
    <property type="project" value="UniProtKB-SubCell"/>
</dbReference>
<dbReference type="GO" id="GO:0005179">
    <property type="term" value="F:hormone activity"/>
    <property type="evidence" value="ECO:0007669"/>
    <property type="project" value="InterPro"/>
</dbReference>
<dbReference type="GO" id="GO:0090729">
    <property type="term" value="F:toxin activity"/>
    <property type="evidence" value="ECO:0007669"/>
    <property type="project" value="UniProtKB-KW"/>
</dbReference>
<dbReference type="GO" id="GO:0008217">
    <property type="term" value="P:regulation of blood pressure"/>
    <property type="evidence" value="ECO:0007669"/>
    <property type="project" value="UniProtKB-KW"/>
</dbReference>
<dbReference type="GO" id="GO:0042311">
    <property type="term" value="P:vasodilation"/>
    <property type="evidence" value="ECO:0007669"/>
    <property type="project" value="UniProtKB-KW"/>
</dbReference>
<dbReference type="InterPro" id="IPR000663">
    <property type="entry name" value="Natr_peptide"/>
</dbReference>
<dbReference type="InterPro" id="IPR030480">
    <property type="entry name" value="Natr_peptide_CS"/>
</dbReference>
<dbReference type="Pfam" id="PF00212">
    <property type="entry name" value="ANP"/>
    <property type="match status" value="1"/>
</dbReference>
<dbReference type="SMART" id="SM00183">
    <property type="entry name" value="NAT_PEP"/>
    <property type="match status" value="1"/>
</dbReference>
<dbReference type="PROSITE" id="PS00263">
    <property type="entry name" value="NATRIURETIC_PEPTIDE"/>
    <property type="match status" value="1"/>
</dbReference>
<organism>
    <name type="scientific">Oxyuranus scutellatus scutellatus</name>
    <name type="common">Australian taipan</name>
    <name type="synonym">Coastal taipan</name>
    <dbReference type="NCBI Taxonomy" id="8667"/>
    <lineage>
        <taxon>Eukaryota</taxon>
        <taxon>Metazoa</taxon>
        <taxon>Chordata</taxon>
        <taxon>Craniata</taxon>
        <taxon>Vertebrata</taxon>
        <taxon>Euteleostomi</taxon>
        <taxon>Lepidosauria</taxon>
        <taxon>Squamata</taxon>
        <taxon>Bifurcata</taxon>
        <taxon>Unidentata</taxon>
        <taxon>Episquamata</taxon>
        <taxon>Toxicofera</taxon>
        <taxon>Serpentes</taxon>
        <taxon>Colubroidea</taxon>
        <taxon>Elapidae</taxon>
        <taxon>Hydrophiinae</taxon>
        <taxon>Oxyuranus</taxon>
    </lineage>
</organism>
<reference key="1">
    <citation type="submission" date="2004-07" db="EMBL/GenBank/DDBJ databases">
        <authorList>
            <person name="Welton R.E."/>
            <person name="Burnell J.N."/>
        </authorList>
    </citation>
    <scope>NUCLEOTIDE SEQUENCE [MRNA]</scope>
    <source>
        <tissue>Venom gland</tissue>
    </source>
</reference>
<reference key="2">
    <citation type="journal article" date="2005" name="Biochem. Biophys. Res. Commun.">
        <title>Novel natriuretic peptides from the venom of the inland taipan (Oxyuranus microlepidotus): isolation, chemical and biological characterisation.</title>
        <authorList>
            <person name="Fry B.G."/>
            <person name="Wickramaratana J.C."/>
            <person name="Lemme S."/>
            <person name="Beuve A."/>
            <person name="Garbers D."/>
            <person name="Hodgson W.C."/>
            <person name="Alewood P.F."/>
        </authorList>
    </citation>
    <scope>PROTEIN SEQUENCE OF 72-106</scope>
    <scope>FUNCTION</scope>
    <scope>SUBCELLULAR LOCATION</scope>
    <scope>MASS SPECTROMETRY</scope>
    <scope>DISULFIDE BOND</scope>
    <source>
        <tissue>Venom</tissue>
    </source>
</reference>
<feature type="signal peptide" evidence="1">
    <location>
        <begin position="1"/>
        <end position="27"/>
    </location>
</feature>
<feature type="propeptide" id="PRO_0000334170" evidence="6">
    <location>
        <begin position="28"/>
        <end position="71"/>
    </location>
</feature>
<feature type="peptide" id="PRO_0000045073" description="Natriuretic peptide TNP-b" evidence="3">
    <location>
        <begin position="72"/>
        <end position="106"/>
    </location>
</feature>
<feature type="propeptide" id="PRO_0000334171" evidence="6">
    <location>
        <begin position="107"/>
        <end position="111"/>
    </location>
</feature>
<feature type="region of interest" description="Disordered" evidence="2">
    <location>
        <begin position="51"/>
        <end position="77"/>
    </location>
</feature>
<feature type="region of interest" description="Disordered" evidence="2">
    <location>
        <begin position="92"/>
        <end position="111"/>
    </location>
</feature>
<feature type="disulfide bond" evidence="3">
    <location>
        <begin position="80"/>
        <end position="96"/>
    </location>
</feature>
<feature type="sequence conflict" description="In Ref. 2; AA sequence." evidence="5" ref="2">
    <original>Q</original>
    <variation>K</variation>
    <location>
        <position position="106"/>
    </location>
</feature>
<accession>P83228</accession>
<accession>Q4VRI2</accession>
<keyword id="KW-0903">Direct protein sequencing</keyword>
<keyword id="KW-1015">Disulfide bond</keyword>
<keyword id="KW-0382">Hypotensive agent</keyword>
<keyword id="KW-0964">Secreted</keyword>
<keyword id="KW-0732">Signal</keyword>
<keyword id="KW-0800">Toxin</keyword>
<keyword id="KW-0838">Vasoactive</keyword>
<keyword id="KW-0840">Vasodilator</keyword>
<protein>
    <recommendedName>
        <fullName evidence="4">Natriuretic peptide TNP-b</fullName>
    </recommendedName>
    <alternativeName>
        <fullName>Taipan natriuretic peptide</fullName>
    </alternativeName>
    <alternativeName>
        <fullName>Venom natriuretic peptide OxsSNPb</fullName>
    </alternativeName>
</protein>
<comment type="function">
    <text evidence="3">Snake venom natriuretic peptide that exhibits vasoactive and probable hypotensive activity (PubMed:15652496). Is only weakly active on natriuretic peptide receptor-C (NPR3) (PubMed:15652496).</text>
</comment>
<comment type="subcellular location">
    <subcellularLocation>
        <location evidence="3">Secreted</location>
    </subcellularLocation>
</comment>
<comment type="tissue specificity">
    <text evidence="6">Expressed by the venom gland.</text>
</comment>
<comment type="mass spectrometry" mass="3661.0" method="Electrospray" evidence="3"/>
<comment type="miscellaneous">
    <text evidence="6">Negative results: does not activate natriuretic peptide receptor 1 (NPR1).</text>
</comment>
<comment type="similarity">
    <text evidence="5">Belongs to the natriuretic peptide family.</text>
</comment>